<dbReference type="EC" id="1.14.13.-"/>
<dbReference type="EMBL" id="AL939123">
    <property type="protein sequence ID" value="CAB45603.1"/>
    <property type="molecule type" value="Genomic_DNA"/>
</dbReference>
<dbReference type="EMBL" id="X74213">
    <property type="protein sequence ID" value="CAA52289.1"/>
    <property type="molecule type" value="Genomic_DNA"/>
</dbReference>
<dbReference type="PIR" id="T35608">
    <property type="entry name" value="T35608"/>
</dbReference>
<dbReference type="RefSeq" id="NP_629463.1">
    <property type="nucleotide sequence ID" value="NC_003888.3"/>
</dbReference>
<dbReference type="RefSeq" id="WP_011030172.1">
    <property type="nucleotide sequence ID" value="NZ_VNID01000040.1"/>
</dbReference>
<dbReference type="SMR" id="P42534"/>
<dbReference type="STRING" id="100226.gene:17762971"/>
<dbReference type="PaxDb" id="100226-SCO5321"/>
<dbReference type="KEGG" id="sco:SCO5321"/>
<dbReference type="PATRIC" id="fig|100226.15.peg.5407"/>
<dbReference type="eggNOG" id="COG0654">
    <property type="taxonomic scope" value="Bacteria"/>
</dbReference>
<dbReference type="HOGENOM" id="CLU_009665_14_2_11"/>
<dbReference type="InParanoid" id="P42534"/>
<dbReference type="OrthoDB" id="8670884at2"/>
<dbReference type="PhylomeDB" id="P42534"/>
<dbReference type="Proteomes" id="UP000001973">
    <property type="component" value="Chromosome"/>
</dbReference>
<dbReference type="GO" id="GO:0071949">
    <property type="term" value="F:FAD binding"/>
    <property type="evidence" value="ECO:0007669"/>
    <property type="project" value="InterPro"/>
</dbReference>
<dbReference type="GO" id="GO:0016491">
    <property type="term" value="F:oxidoreductase activity"/>
    <property type="evidence" value="ECO:0000318"/>
    <property type="project" value="GO_Central"/>
</dbReference>
<dbReference type="GO" id="GO:0016709">
    <property type="term" value="F:oxidoreductase activity, acting on paired donors, with incorporation or reduction of molecular oxygen, NAD(P)H as one donor, and incorporation of one atom of oxygen"/>
    <property type="evidence" value="ECO:0007669"/>
    <property type="project" value="UniProtKB-ARBA"/>
</dbReference>
<dbReference type="Gene3D" id="3.40.30.120">
    <property type="match status" value="1"/>
</dbReference>
<dbReference type="Gene3D" id="3.30.9.10">
    <property type="entry name" value="D-Amino Acid Oxidase, subunit A, domain 2"/>
    <property type="match status" value="1"/>
</dbReference>
<dbReference type="Gene3D" id="3.50.50.60">
    <property type="entry name" value="FAD/NAD(P)-binding domain"/>
    <property type="match status" value="1"/>
</dbReference>
<dbReference type="InterPro" id="IPR002938">
    <property type="entry name" value="FAD-bd"/>
</dbReference>
<dbReference type="InterPro" id="IPR036188">
    <property type="entry name" value="FAD/NAD-bd_sf"/>
</dbReference>
<dbReference type="InterPro" id="IPR050641">
    <property type="entry name" value="RIFMO-like"/>
</dbReference>
<dbReference type="PANTHER" id="PTHR43004:SF19">
    <property type="entry name" value="BINDING MONOOXYGENASE, PUTATIVE (JCVI)-RELATED"/>
    <property type="match status" value="1"/>
</dbReference>
<dbReference type="PANTHER" id="PTHR43004">
    <property type="entry name" value="TRK SYSTEM POTASSIUM UPTAKE PROTEIN"/>
    <property type="match status" value="1"/>
</dbReference>
<dbReference type="Pfam" id="PF01494">
    <property type="entry name" value="FAD_binding_3"/>
    <property type="match status" value="1"/>
</dbReference>
<dbReference type="Pfam" id="PF21274">
    <property type="entry name" value="Rng_hyd_C"/>
    <property type="match status" value="1"/>
</dbReference>
<dbReference type="PRINTS" id="PR00420">
    <property type="entry name" value="RNGMNOXGNASE"/>
</dbReference>
<dbReference type="SUPFAM" id="SSF51905">
    <property type="entry name" value="FAD/NAD(P)-binding domain"/>
    <property type="match status" value="1"/>
</dbReference>
<proteinExistence type="inferred from homology"/>
<organism>
    <name type="scientific">Streptomyces coelicolor (strain ATCC BAA-471 / A3(2) / M145)</name>
    <dbReference type="NCBI Taxonomy" id="100226"/>
    <lineage>
        <taxon>Bacteria</taxon>
        <taxon>Bacillati</taxon>
        <taxon>Actinomycetota</taxon>
        <taxon>Actinomycetes</taxon>
        <taxon>Kitasatosporales</taxon>
        <taxon>Streptomycetaceae</taxon>
        <taxon>Streptomyces</taxon>
        <taxon>Streptomyces albidoflavus group</taxon>
    </lineage>
</organism>
<accession>P42534</accession>
<accession>Q9S2L7</accession>
<feature type="chain" id="PRO_0000214041" description="Putative polyketide hydroxylase">
    <location>
        <begin position="1"/>
        <end position="627"/>
    </location>
</feature>
<feature type="region of interest" description="Disordered" evidence="3">
    <location>
        <begin position="370"/>
        <end position="469"/>
    </location>
</feature>
<feature type="compositionally biased region" description="Gly residues" evidence="3">
    <location>
        <begin position="395"/>
        <end position="469"/>
    </location>
</feature>
<feature type="binding site" evidence="2">
    <location>
        <begin position="22"/>
        <end position="51"/>
    </location>
    <ligand>
        <name>FAD</name>
        <dbReference type="ChEBI" id="CHEBI:57692"/>
    </ligand>
</feature>
<feature type="binding site" evidence="2">
    <location>
        <begin position="309"/>
        <end position="319"/>
    </location>
    <ligand>
        <name>FAD</name>
        <dbReference type="ChEBI" id="CHEBI:57692"/>
    </ligand>
</feature>
<feature type="sequence conflict" description="In Ref. 2; CAA52289." evidence="4" ref="2">
    <original>R</original>
    <variation>A</variation>
    <location>
        <position position="60"/>
    </location>
</feature>
<feature type="sequence conflict" description="In Ref. 2; CAA52289." evidence="4" ref="2">
    <original>L</original>
    <variation>LH</variation>
    <location>
        <position position="145"/>
    </location>
</feature>
<feature type="sequence conflict" description="In Ref. 2; CAA52289." evidence="4" ref="2">
    <original>C</original>
    <variation>S</variation>
    <location>
        <position position="234"/>
    </location>
</feature>
<comment type="function">
    <text>Involved in developmentally regulated synthesis of a compound biosynthetically related to polyketide antibiotics which is essential for spore color in Streptococcus coelicolor.</text>
</comment>
<comment type="cofactor">
    <cofactor evidence="1">
        <name>FAD</name>
        <dbReference type="ChEBI" id="CHEBI:57692"/>
    </cofactor>
</comment>
<comment type="similarity">
    <text evidence="4">Belongs to the PheA/TfdB FAD monooxygenase family.</text>
</comment>
<name>HYDL_STRCO</name>
<evidence type="ECO:0000250" key="1"/>
<evidence type="ECO:0000255" key="2"/>
<evidence type="ECO:0000256" key="3">
    <source>
        <dbReference type="SAM" id="MobiDB-lite"/>
    </source>
</evidence>
<evidence type="ECO:0000305" key="4"/>
<reference key="1">
    <citation type="journal article" date="2002" name="Nature">
        <title>Complete genome sequence of the model actinomycete Streptomyces coelicolor A3(2).</title>
        <authorList>
            <person name="Bentley S.D."/>
            <person name="Chater K.F."/>
            <person name="Cerdeno-Tarraga A.-M."/>
            <person name="Challis G.L."/>
            <person name="Thomson N.R."/>
            <person name="James K.D."/>
            <person name="Harris D.E."/>
            <person name="Quail M.A."/>
            <person name="Kieser H."/>
            <person name="Harper D."/>
            <person name="Bateman A."/>
            <person name="Brown S."/>
            <person name="Chandra G."/>
            <person name="Chen C.W."/>
            <person name="Collins M."/>
            <person name="Cronin A."/>
            <person name="Fraser A."/>
            <person name="Goble A."/>
            <person name="Hidalgo J."/>
            <person name="Hornsby T."/>
            <person name="Howarth S."/>
            <person name="Huang C.-H."/>
            <person name="Kieser T."/>
            <person name="Larke L."/>
            <person name="Murphy L.D."/>
            <person name="Oliver K."/>
            <person name="O'Neil S."/>
            <person name="Rabbinowitsch E."/>
            <person name="Rajandream M.A."/>
            <person name="Rutherford K.M."/>
            <person name="Rutter S."/>
            <person name="Seeger K."/>
            <person name="Saunders D."/>
            <person name="Sharp S."/>
            <person name="Squares R."/>
            <person name="Squares S."/>
            <person name="Taylor K."/>
            <person name="Warren T."/>
            <person name="Wietzorrek A."/>
            <person name="Woodward J.R."/>
            <person name="Barrell B.G."/>
            <person name="Parkhill J."/>
            <person name="Hopwood D.A."/>
        </authorList>
    </citation>
    <scope>NUCLEOTIDE SEQUENCE [LARGE SCALE GENOMIC DNA]</scope>
    <source>
        <strain>ATCC BAA-471 / A3(2) / M145</strain>
    </source>
</reference>
<reference key="2">
    <citation type="journal article" date="1993" name="J. Bacteriol.">
        <title>A hydroxylase-like gene product contributes to synthesis of a polyketide spore pigment in Streptomyces halstedii.</title>
        <authorList>
            <person name="Blanco G."/>
            <person name="Pereda A."/>
            <person name="Brian P."/>
            <person name="Mendez C."/>
            <person name="Chater K.F."/>
            <person name="Salas J.A."/>
        </authorList>
    </citation>
    <scope>NUCLEOTIDE SEQUENCE [GENOMIC DNA] OF 1-255</scope>
    <source>
        <strain>A3(2) / NRRL B-16638</strain>
    </source>
</reference>
<gene>
    <name type="ordered locus">SCO5321</name>
    <name type="ORF">SC6G9.12c</name>
</gene>
<protein>
    <recommendedName>
        <fullName>Putative polyketide hydroxylase</fullName>
        <ecNumber>1.14.13.-</ecNumber>
    </recommendedName>
    <alternativeName>
        <fullName>WhiE ORF VIII</fullName>
    </alternativeName>
</protein>
<keyword id="KW-0274">FAD</keyword>
<keyword id="KW-0285">Flavoprotein</keyword>
<keyword id="KW-0560">Oxidoreductase</keyword>
<keyword id="KW-1185">Reference proteome</keyword>
<sequence>MNERADRSGGAAPGGDRTHRVPVLVVGGSLVGLSTSVFLGRLGVRHTLVERHAGTSIHPRGRGNNVRTMEIFRVAGTEPDIRRAAATLADNHGILQAPTLAGDAGEWLFKQIDPGGGLARFSPSSWCLCSQNDLEPELLTHATNLGGDLRFGTELLSFEADTEGVTAIVKSRETGEHTTIRADYLVAADGPRSPVREQLGIGQSGPGDLFHNVSITFRSRRLADVVGDRRFIVCYLTDENADGALLPVDNRENWVFHAPWHPEQGETVEDFTDERCAAHIRRAIGDPDLDVEITGKAPWHAAQRVARSYRSGRVLLAGDSAHEMSPTGAFGSNTGIQDAHNLAWKLAAVLEGWAGEALLDTYDTERRPVAEATSARAAHRSVEHSHPGFAPPPVAGGGGPGAGTPGGAGRGTGGPGGPGGPGGLGGPGGPGGTGGPGGPGGPGGPDGPRGAGGAPGGGPGGGPGGGGPQRGILNVALGYRYPRGAVVGADPATPVVPEGLDLTGAPGSRAPHLWVRRGQDRLSTLDLYEDSLVLLSDAAQPTGWHEAAAGVAAGMRVPLKSYRVGGSPGADLNPDDEETDWARAHGVTRGGAVLVRPDGFVAWRSPGPAPDPESMLRQVVGTVLARS</sequence>